<feature type="chain" id="PRO_0000171753" description="DNA dC-&gt;dU-editing enzyme APOBEC-3B">
    <location>
        <begin position="1"/>
        <end position="382"/>
    </location>
</feature>
<feature type="domain" description="CMP/dCMP-type deaminase 1" evidence="3">
    <location>
        <begin position="29"/>
        <end position="138"/>
    </location>
</feature>
<feature type="domain" description="CMP/dCMP-type deaminase 2" evidence="3">
    <location>
        <begin position="210"/>
        <end position="326"/>
    </location>
</feature>
<feature type="active site" description="Proton donor" evidence="2">
    <location>
        <position position="255"/>
    </location>
</feature>
<feature type="binding site" evidence="1">
    <location>
        <position position="66"/>
    </location>
    <ligand>
        <name>Zn(2+)</name>
        <dbReference type="ChEBI" id="CHEBI:29105"/>
    </ligand>
</feature>
<feature type="binding site" evidence="1">
    <location>
        <position position="97"/>
    </location>
    <ligand>
        <name>Zn(2+)</name>
        <dbReference type="ChEBI" id="CHEBI:29105"/>
    </ligand>
</feature>
<feature type="binding site" evidence="1">
    <location>
        <position position="100"/>
    </location>
    <ligand>
        <name>Zn(2+)</name>
        <dbReference type="ChEBI" id="CHEBI:29105"/>
    </ligand>
</feature>
<feature type="binding site" evidence="1">
    <location>
        <position position="253"/>
    </location>
    <ligand>
        <name>Zn(2+)</name>
        <dbReference type="ChEBI" id="CHEBI:29105"/>
    </ligand>
</feature>
<feature type="binding site" evidence="1">
    <location>
        <position position="284"/>
    </location>
    <ligand>
        <name>Zn(2+)</name>
        <dbReference type="ChEBI" id="CHEBI:29105"/>
    </ligand>
</feature>
<feature type="binding site" evidence="1">
    <location>
        <position position="289"/>
    </location>
    <ligand>
        <name>Zn(2+)</name>
        <dbReference type="ChEBI" id="CHEBI:29105"/>
    </ligand>
</feature>
<feature type="splice variant" id="VSP_009802" description="In isoform 2." evidence="21">
    <original>YLMDPDTFTFNFNNDPLVLRRRQTYLCYEVERLDNGTWVLMDQHMGFLCNEAKNLLCGFYGRHAELRFLDLVPSLQLDPAQIYRVTWFISWSPCFSWGCAGEVRAFLQENTHVRLRIFAARIYDYDPLYKEALQMLRDAGAQVSIMTYDEFEYCWDTFVYRQGCPFQPWDGLEEHSQALSGRLRAILQNQGN</original>
    <variation>LRIFSVAFTAAMRSCASWTWFLLCSWTRPRSTGSLGSSPGAPASPGAVPGKCVRSFRRTHT</variation>
    <location>
        <begin position="191"/>
        <end position="382"/>
    </location>
</feature>
<feature type="splice variant" id="VSP_044900" description="In isoform 3." evidence="20">
    <location>
        <begin position="242"/>
        <end position="266"/>
    </location>
</feature>
<feature type="sequence variant" id="VAR_018142" description="In dbSNP:rs2076109." evidence="7">
    <original>K</original>
    <variation>E</variation>
    <location>
        <position position="62"/>
    </location>
</feature>
<feature type="sequence variant" id="VAR_018143" description="In dbSNP:rs2076110.">
    <original>P</original>
    <variation>L</variation>
    <location>
        <position position="98"/>
    </location>
</feature>
<feature type="sequence variant" id="VAR_033455" description="In dbSNP:rs17000697.">
    <original>S</original>
    <variation>A</variation>
    <location>
        <position position="109"/>
    </location>
</feature>
<feature type="sequence variant" id="VAR_018144" description="In dbSNP:rs5995649." evidence="4 7 9">
    <original>T</original>
    <variation>K</variation>
    <location>
        <position position="146"/>
    </location>
</feature>
<feature type="sequence variant" id="VAR_048722" description="In dbSNP:rs1053813.">
    <original>R</original>
    <variation>H</variation>
    <location>
        <position position="351"/>
    </location>
</feature>
<feature type="sequence conflict" description="In Ref. 1; AAD00090." evidence="22" ref="1">
    <original>KL</original>
    <variation>NV</variation>
    <location>
        <begin position="103"/>
        <end position="104"/>
    </location>
</feature>
<feature type="sequence conflict" description="In Ref. 1; AAD00089." evidence="22" ref="1">
    <original>TW</original>
    <variation>WM</variation>
    <location>
        <begin position="227"/>
        <end position="228"/>
    </location>
</feature>
<feature type="sequence conflict" description="In Ref. 1; AAD00089." evidence="22" ref="1">
    <original>EL</original>
    <variation>DW</variation>
    <location>
        <begin position="255"/>
        <end position="256"/>
    </location>
</feature>
<feature type="sequence conflict" description="In Ref. 1; AAD00089." evidence="22" ref="1">
    <original>R</original>
    <variation>P</variation>
    <location>
        <position position="306"/>
    </location>
</feature>
<feature type="sequence conflict" description="In Ref. 2; AAW31743." evidence="22" ref="2">
    <original>F</original>
    <variation>S</variation>
    <location>
        <position position="356"/>
    </location>
</feature>
<feature type="helix" evidence="25">
    <location>
        <begin position="14"/>
        <end position="21"/>
    </location>
</feature>
<feature type="strand" evidence="25">
    <location>
        <begin position="32"/>
        <end position="43"/>
    </location>
</feature>
<feature type="strand" evidence="25">
    <location>
        <begin position="46"/>
        <end position="61"/>
    </location>
</feature>
<feature type="helix" evidence="25">
    <location>
        <begin position="63"/>
        <end position="65"/>
    </location>
</feature>
<feature type="helix" evidence="25">
    <location>
        <begin position="67"/>
        <end position="78"/>
    </location>
</feature>
<feature type="strand" evidence="25">
    <location>
        <begin position="86"/>
        <end position="94"/>
    </location>
</feature>
<feature type="helix" evidence="25">
    <location>
        <begin position="98"/>
        <end position="110"/>
    </location>
</feature>
<feature type="strand" evidence="25">
    <location>
        <begin position="114"/>
        <end position="122"/>
    </location>
</feature>
<feature type="helix" evidence="25">
    <location>
        <begin position="128"/>
        <end position="131"/>
    </location>
</feature>
<feature type="helix" evidence="25">
    <location>
        <begin position="134"/>
        <end position="140"/>
    </location>
</feature>
<feature type="strand" evidence="25">
    <location>
        <begin position="144"/>
        <end position="147"/>
    </location>
</feature>
<feature type="helix" evidence="25">
    <location>
        <begin position="150"/>
        <end position="160"/>
    </location>
</feature>
<feature type="helix" evidence="25">
    <location>
        <begin position="174"/>
        <end position="188"/>
    </location>
</feature>
<feature type="helix" evidence="24">
    <location>
        <begin position="195"/>
        <end position="202"/>
    </location>
</feature>
<feature type="helix" evidence="26">
    <location>
        <begin position="206"/>
        <end position="208"/>
    </location>
</feature>
<feature type="strand" evidence="24">
    <location>
        <begin position="215"/>
        <end position="224"/>
    </location>
</feature>
<feature type="strand" evidence="24">
    <location>
        <begin position="227"/>
        <end position="230"/>
    </location>
</feature>
<feature type="helix" evidence="24">
    <location>
        <begin position="232"/>
        <end position="234"/>
    </location>
</feature>
<feature type="strand" evidence="24">
    <location>
        <begin position="236"/>
        <end position="239"/>
    </location>
</feature>
<feature type="helix" evidence="23">
    <location>
        <begin position="245"/>
        <end position="247"/>
    </location>
</feature>
<feature type="helix" evidence="24">
    <location>
        <begin position="254"/>
        <end position="261"/>
    </location>
</feature>
<feature type="helix" evidence="24">
    <location>
        <begin position="262"/>
        <end position="265"/>
    </location>
</feature>
<feature type="strand" evidence="23">
    <location>
        <begin position="269"/>
        <end position="271"/>
    </location>
</feature>
<feature type="strand" evidence="24">
    <location>
        <begin position="273"/>
        <end position="281"/>
    </location>
</feature>
<feature type="helix" evidence="24">
    <location>
        <begin position="289"/>
        <end position="299"/>
    </location>
</feature>
<feature type="turn" evidence="23">
    <location>
        <begin position="300"/>
        <end position="302"/>
    </location>
</feature>
<feature type="strand" evidence="24">
    <location>
        <begin position="303"/>
        <end position="311"/>
    </location>
</feature>
<feature type="helix" evidence="24">
    <location>
        <begin position="319"/>
        <end position="328"/>
    </location>
</feature>
<feature type="strand" evidence="24">
    <location>
        <begin position="332"/>
        <end position="335"/>
    </location>
</feature>
<feature type="helix" evidence="24">
    <location>
        <begin position="338"/>
        <end position="348"/>
    </location>
</feature>
<feature type="helix" evidence="24">
    <location>
        <begin position="362"/>
        <end position="377"/>
    </location>
</feature>
<accession>Q9UH17</accession>
<accession>B0QYD2</accession>
<accession>O95618</accession>
<accession>Q20WL1</accession>
<accession>Q5IFJ4</accession>
<accession>Q7Z2N3</accession>
<accession>Q7Z6D6</accession>
<accession>Q9UE74</accession>
<keyword id="KW-0002">3D-structure</keyword>
<keyword id="KW-0025">Alternative splicing</keyword>
<keyword id="KW-0051">Antiviral defense</keyword>
<keyword id="KW-0378">Hydrolase</keyword>
<keyword id="KW-0391">Immunity</keyword>
<keyword id="KW-0399">Innate immunity</keyword>
<keyword id="KW-0479">Metal-binding</keyword>
<keyword id="KW-0539">Nucleus</keyword>
<keyword id="KW-1267">Proteomics identification</keyword>
<keyword id="KW-1185">Reference proteome</keyword>
<keyword id="KW-0677">Repeat</keyword>
<keyword id="KW-0694">RNA-binding</keyword>
<keyword id="KW-0862">Zinc</keyword>
<name>ABC3B_HUMAN</name>
<dbReference type="EC" id="3.5.4.38"/>
<dbReference type="EMBL" id="U61083">
    <property type="protein sequence ID" value="AAD00089.1"/>
    <property type="status" value="ALT_INIT"/>
    <property type="molecule type" value="mRNA"/>
</dbReference>
<dbReference type="EMBL" id="U61084">
    <property type="protein sequence ID" value="AAD00090.1"/>
    <property type="status" value="ALT_FRAME"/>
    <property type="molecule type" value="mRNA"/>
</dbReference>
<dbReference type="EMBL" id="AY743217">
    <property type="protein sequence ID" value="AAW31743.1"/>
    <property type="molecule type" value="mRNA"/>
</dbReference>
<dbReference type="EMBL" id="CT841510">
    <property type="protein sequence ID" value="CAJ86440.1"/>
    <property type="molecule type" value="mRNA"/>
</dbReference>
<dbReference type="EMBL" id="AL022318">
    <property type="status" value="NOT_ANNOTATED_CDS"/>
    <property type="molecule type" value="Genomic_DNA"/>
</dbReference>
<dbReference type="EMBL" id="BC053859">
    <property type="protein sequence ID" value="AAH53859.1"/>
    <property type="molecule type" value="mRNA"/>
</dbReference>
<dbReference type="CCDS" id="CCDS13982.1">
    <molecule id="Q9UH17-1"/>
</dbReference>
<dbReference type="CCDS" id="CCDS58807.1">
    <molecule id="Q9UH17-3"/>
</dbReference>
<dbReference type="RefSeq" id="NP_001257340.2">
    <molecule id="Q9UH17-3"/>
    <property type="nucleotide sequence ID" value="NM_001270411.2"/>
</dbReference>
<dbReference type="RefSeq" id="NP_004891.4">
    <molecule id="Q9UH17-1"/>
    <property type="nucleotide sequence ID" value="NM_004900.4"/>
</dbReference>
<dbReference type="PDB" id="2NBQ">
    <property type="method" value="NMR"/>
    <property type="chains" value="A=187-382"/>
</dbReference>
<dbReference type="PDB" id="5CQD">
    <property type="method" value="X-ray"/>
    <property type="resolution" value="2.08 A"/>
    <property type="chains" value="A/C=187-378"/>
</dbReference>
<dbReference type="PDB" id="5CQH">
    <property type="method" value="X-ray"/>
    <property type="resolution" value="1.73 A"/>
    <property type="chains" value="A=187-378"/>
</dbReference>
<dbReference type="PDB" id="5CQI">
    <property type="method" value="X-ray"/>
    <property type="resolution" value="1.68 A"/>
    <property type="chains" value="A=187-378"/>
</dbReference>
<dbReference type="PDB" id="5CQK">
    <property type="method" value="X-ray"/>
    <property type="resolution" value="1.88 A"/>
    <property type="chains" value="A=187-378"/>
</dbReference>
<dbReference type="PDB" id="5SXG">
    <property type="method" value="X-ray"/>
    <property type="resolution" value="1.93 A"/>
    <property type="chains" value="A/B=191-378"/>
</dbReference>
<dbReference type="PDB" id="5SXH">
    <property type="method" value="X-ray"/>
    <property type="resolution" value="1.78 A"/>
    <property type="chains" value="A/B=191-378"/>
</dbReference>
<dbReference type="PDB" id="5TD5">
    <property type="method" value="X-ray"/>
    <property type="resolution" value="1.72 A"/>
    <property type="chains" value="A=187-378"/>
</dbReference>
<dbReference type="PDB" id="5TKM">
    <property type="method" value="X-ray"/>
    <property type="resolution" value="1.90 A"/>
    <property type="chains" value="A/B=1-191"/>
</dbReference>
<dbReference type="PDB" id="6NFK">
    <property type="method" value="X-ray"/>
    <property type="resolution" value="1.86 A"/>
    <property type="chains" value="A=187-378"/>
</dbReference>
<dbReference type="PDB" id="6NFL">
    <property type="method" value="X-ray"/>
    <property type="resolution" value="1.73 A"/>
    <property type="chains" value="A=187-378"/>
</dbReference>
<dbReference type="PDB" id="6NFM">
    <property type="method" value="X-ray"/>
    <property type="resolution" value="2.53 A"/>
    <property type="chains" value="A=187-378"/>
</dbReference>
<dbReference type="PDB" id="7RW6">
    <property type="method" value="EM"/>
    <property type="resolution" value="2.55 A"/>
    <property type="chains" value="B/D=193-382"/>
</dbReference>
<dbReference type="PDBsum" id="2NBQ"/>
<dbReference type="PDBsum" id="5CQD"/>
<dbReference type="PDBsum" id="5CQH"/>
<dbReference type="PDBsum" id="5CQI"/>
<dbReference type="PDBsum" id="5CQK"/>
<dbReference type="PDBsum" id="5SXG"/>
<dbReference type="PDBsum" id="5SXH"/>
<dbReference type="PDBsum" id="5TD5"/>
<dbReference type="PDBsum" id="5TKM"/>
<dbReference type="PDBsum" id="6NFK"/>
<dbReference type="PDBsum" id="6NFL"/>
<dbReference type="PDBsum" id="6NFM"/>
<dbReference type="PDBsum" id="7RW6"/>
<dbReference type="EMDB" id="EMD-24709"/>
<dbReference type="SMR" id="Q9UH17"/>
<dbReference type="BioGRID" id="114950">
    <property type="interactions" value="147"/>
</dbReference>
<dbReference type="FunCoup" id="Q9UH17">
    <property type="interactions" value="891"/>
</dbReference>
<dbReference type="IntAct" id="Q9UH17">
    <property type="interactions" value="48"/>
</dbReference>
<dbReference type="MINT" id="Q9UH17"/>
<dbReference type="STRING" id="9606.ENSP00000327459"/>
<dbReference type="ChEMBL" id="CHEMBL4523487"/>
<dbReference type="GlyGen" id="Q9UH17">
    <property type="glycosylation" value="1 site, 1 O-linked glycan (1 site)"/>
</dbReference>
<dbReference type="iPTMnet" id="Q9UH17"/>
<dbReference type="PhosphoSitePlus" id="Q9UH17"/>
<dbReference type="SwissPalm" id="Q9UH17"/>
<dbReference type="BioMuta" id="APOBEC3B"/>
<dbReference type="DMDM" id="12643884"/>
<dbReference type="jPOST" id="Q9UH17"/>
<dbReference type="MassIVE" id="Q9UH17"/>
<dbReference type="PaxDb" id="9606-ENSP00000327459"/>
<dbReference type="PeptideAtlas" id="Q9UH17"/>
<dbReference type="ProteomicsDB" id="2630"/>
<dbReference type="ProteomicsDB" id="84274">
    <molecule id="Q9UH17-1"/>
</dbReference>
<dbReference type="ProteomicsDB" id="84275">
    <molecule id="Q9UH17-2"/>
</dbReference>
<dbReference type="Pumba" id="Q9UH17"/>
<dbReference type="ABCD" id="Q9UH17">
    <property type="antibodies" value="1 sequenced antibody"/>
</dbReference>
<dbReference type="Antibodypedia" id="35027">
    <property type="antibodies" value="168 antibodies from 29 providers"/>
</dbReference>
<dbReference type="DNASU" id="9582"/>
<dbReference type="Ensembl" id="ENST00000333467.4">
    <molecule id="Q9UH17-1"/>
    <property type="protein sequence ID" value="ENSP00000327459.3"/>
    <property type="gene ID" value="ENSG00000179750.16"/>
</dbReference>
<dbReference type="Ensembl" id="ENST00000335760.9">
    <molecule id="Q9UH17-2"/>
    <property type="protein sequence ID" value="ENSP00000338897.5"/>
    <property type="gene ID" value="ENSG00000179750.16"/>
</dbReference>
<dbReference type="Ensembl" id="ENST00000407298.7">
    <molecule id="Q9UH17-3"/>
    <property type="protein sequence ID" value="ENSP00000385068.3"/>
    <property type="gene ID" value="ENSG00000179750.16"/>
</dbReference>
<dbReference type="GeneID" id="9582"/>
<dbReference type="KEGG" id="hsa:9582"/>
<dbReference type="MANE-Select" id="ENST00000333467.4">
    <property type="protein sequence ID" value="ENSP00000327459.3"/>
    <property type="RefSeq nucleotide sequence ID" value="NM_004900.5"/>
    <property type="RefSeq protein sequence ID" value="NP_004891.5"/>
</dbReference>
<dbReference type="UCSC" id="uc003awo.3">
    <molecule id="Q9UH17-1"/>
    <property type="organism name" value="human"/>
</dbReference>
<dbReference type="AGR" id="HGNC:17352"/>
<dbReference type="CTD" id="9582"/>
<dbReference type="DisGeNET" id="9582"/>
<dbReference type="GeneCards" id="APOBEC3B"/>
<dbReference type="HGNC" id="HGNC:17352">
    <property type="gene designation" value="APOBEC3B"/>
</dbReference>
<dbReference type="HPA" id="ENSG00000179750">
    <property type="expression patterns" value="Tissue enhanced (bone marrow, intestine)"/>
</dbReference>
<dbReference type="MIM" id="607110">
    <property type="type" value="gene"/>
</dbReference>
<dbReference type="neXtProt" id="NX_Q9UH17"/>
<dbReference type="OpenTargets" id="ENSG00000179750"/>
<dbReference type="PharmGKB" id="PA24892"/>
<dbReference type="VEuPathDB" id="HostDB:ENSG00000179750"/>
<dbReference type="eggNOG" id="KOG4075">
    <property type="taxonomic scope" value="Eukaryota"/>
</dbReference>
<dbReference type="GeneTree" id="ENSGT00940000164701"/>
<dbReference type="HOGENOM" id="CLU_047918_0_0_1"/>
<dbReference type="InParanoid" id="Q9UH17"/>
<dbReference type="OMA" id="LCHKVEL"/>
<dbReference type="OrthoDB" id="9445293at2759"/>
<dbReference type="PAN-GO" id="Q9UH17">
    <property type="GO annotations" value="12 GO annotations based on evolutionary models"/>
</dbReference>
<dbReference type="PhylomeDB" id="Q9UH17"/>
<dbReference type="TreeFam" id="TF331356"/>
<dbReference type="BRENDA" id="3.5.4.38">
    <property type="organism ID" value="2681"/>
</dbReference>
<dbReference type="PathwayCommons" id="Q9UH17"/>
<dbReference type="Reactome" id="R-HSA-72200">
    <property type="pathway name" value="mRNA Editing: C to U Conversion"/>
</dbReference>
<dbReference type="Reactome" id="R-HSA-75094">
    <property type="pathway name" value="Formation of the Editosome"/>
</dbReference>
<dbReference type="SignaLink" id="Q9UH17"/>
<dbReference type="SIGNOR" id="Q9UH17"/>
<dbReference type="BioGRID-ORCS" id="9582">
    <property type="hits" value="12 hits in 1155 CRISPR screens"/>
</dbReference>
<dbReference type="ChiTaRS" id="APOBEC3B">
    <property type="organism name" value="human"/>
</dbReference>
<dbReference type="EvolutionaryTrace" id="Q9UH17"/>
<dbReference type="GeneWiki" id="APOBEC3B"/>
<dbReference type="GenomeRNAi" id="9582"/>
<dbReference type="Pharos" id="Q9UH17">
    <property type="development level" value="Tbio"/>
</dbReference>
<dbReference type="PRO" id="PR:Q9UH17"/>
<dbReference type="Proteomes" id="UP000005640">
    <property type="component" value="Chromosome 22"/>
</dbReference>
<dbReference type="RNAct" id="Q9UH17">
    <property type="molecule type" value="protein"/>
</dbReference>
<dbReference type="Bgee" id="ENSG00000179750">
    <property type="expression patterns" value="Expressed in primordial germ cell in gonad and 91 other cell types or tissues"/>
</dbReference>
<dbReference type="ExpressionAtlas" id="Q9UH17">
    <property type="expression patterns" value="baseline and differential"/>
</dbReference>
<dbReference type="GO" id="GO:0005737">
    <property type="term" value="C:cytoplasm"/>
    <property type="evidence" value="ECO:0000318"/>
    <property type="project" value="GO_Central"/>
</dbReference>
<dbReference type="GO" id="GO:0005654">
    <property type="term" value="C:nucleoplasm"/>
    <property type="evidence" value="ECO:0000314"/>
    <property type="project" value="HPA"/>
</dbReference>
<dbReference type="GO" id="GO:0005634">
    <property type="term" value="C:nucleus"/>
    <property type="evidence" value="ECO:0000314"/>
    <property type="project" value="UniProtKB"/>
</dbReference>
<dbReference type="GO" id="GO:0000932">
    <property type="term" value="C:P-body"/>
    <property type="evidence" value="ECO:0000318"/>
    <property type="project" value="GO_Central"/>
</dbReference>
<dbReference type="GO" id="GO:0004126">
    <property type="term" value="F:cytidine deaminase activity"/>
    <property type="evidence" value="ECO:0000315"/>
    <property type="project" value="UniProtKB"/>
</dbReference>
<dbReference type="GO" id="GO:0003723">
    <property type="term" value="F:RNA binding"/>
    <property type="evidence" value="ECO:0007005"/>
    <property type="project" value="UniProtKB"/>
</dbReference>
<dbReference type="GO" id="GO:0008270">
    <property type="term" value="F:zinc ion binding"/>
    <property type="evidence" value="ECO:0007669"/>
    <property type="project" value="InterPro"/>
</dbReference>
<dbReference type="GO" id="GO:0044355">
    <property type="term" value="P:clearance of foreign intracellular DNA"/>
    <property type="evidence" value="ECO:0000314"/>
    <property type="project" value="GO_Central"/>
</dbReference>
<dbReference type="GO" id="GO:0016554">
    <property type="term" value="P:cytidine to uridine editing"/>
    <property type="evidence" value="ECO:0000318"/>
    <property type="project" value="GO_Central"/>
</dbReference>
<dbReference type="GO" id="GO:0051607">
    <property type="term" value="P:defense response to virus"/>
    <property type="evidence" value="ECO:0000314"/>
    <property type="project" value="UniProtKB"/>
</dbReference>
<dbReference type="GO" id="GO:0070383">
    <property type="term" value="P:DNA cytosine deamination"/>
    <property type="evidence" value="ECO:0000318"/>
    <property type="project" value="GO_Central"/>
</dbReference>
<dbReference type="GO" id="GO:0045087">
    <property type="term" value="P:innate immune response"/>
    <property type="evidence" value="ECO:0007669"/>
    <property type="project" value="UniProtKB-KW"/>
</dbReference>
<dbReference type="GO" id="GO:0045869">
    <property type="term" value="P:negative regulation of single stranded viral RNA replication via double stranded DNA intermediate"/>
    <property type="evidence" value="ECO:0000318"/>
    <property type="project" value="GO_Central"/>
</dbReference>
<dbReference type="GO" id="GO:0010526">
    <property type="term" value="P:transposable element silencing"/>
    <property type="evidence" value="ECO:0000314"/>
    <property type="project" value="UniProtKB"/>
</dbReference>
<dbReference type="CDD" id="cd01283">
    <property type="entry name" value="cytidine_deaminase"/>
    <property type="match status" value="1"/>
</dbReference>
<dbReference type="FunFam" id="3.40.140.10:FF:000044">
    <property type="entry name" value="Apolipoprotein B mRNA editing enzyme catalytic subunit 3B"/>
    <property type="match status" value="1"/>
</dbReference>
<dbReference type="FunFam" id="3.40.140.10:FF:000029">
    <property type="entry name" value="DNA dC-&gt;dU-editing enzyme APOBEC-3G"/>
    <property type="match status" value="1"/>
</dbReference>
<dbReference type="Gene3D" id="3.40.140.10">
    <property type="entry name" value="Cytidine Deaminase, domain 2"/>
    <property type="match status" value="2"/>
</dbReference>
<dbReference type="InterPro" id="IPR016192">
    <property type="entry name" value="APOBEC/CMP_deaminase_Zn-bd"/>
</dbReference>
<dbReference type="InterPro" id="IPR050610">
    <property type="entry name" value="APOBEC_Cyt_Deaminase"/>
</dbReference>
<dbReference type="InterPro" id="IPR002125">
    <property type="entry name" value="CMP_dCMP_dom"/>
</dbReference>
<dbReference type="InterPro" id="IPR016193">
    <property type="entry name" value="Cytidine_deaminase-like"/>
</dbReference>
<dbReference type="PANTHER" id="PTHR13857:SF39">
    <property type="entry name" value="DNA DC-DU-EDITING ENZYME APOBEC-3A-RELATED"/>
    <property type="match status" value="1"/>
</dbReference>
<dbReference type="PANTHER" id="PTHR13857">
    <property type="entry name" value="MRNA EDITING ENZYME"/>
    <property type="match status" value="1"/>
</dbReference>
<dbReference type="Pfam" id="PF18782">
    <property type="entry name" value="NAD2"/>
    <property type="match status" value="2"/>
</dbReference>
<dbReference type="SUPFAM" id="SSF53927">
    <property type="entry name" value="Cytidine deaminase-like"/>
    <property type="match status" value="2"/>
</dbReference>
<dbReference type="PROSITE" id="PS00903">
    <property type="entry name" value="CYT_DCMP_DEAMINASES_1"/>
    <property type="match status" value="2"/>
</dbReference>
<dbReference type="PROSITE" id="PS51747">
    <property type="entry name" value="CYT_DCMP_DEAMINASES_2"/>
    <property type="match status" value="2"/>
</dbReference>
<protein>
    <recommendedName>
        <fullName>DNA dC-&gt;dU-editing enzyme APOBEC-3B</fullName>
        <shortName>A3B</shortName>
        <ecNumber>3.5.4.38</ecNumber>
    </recommendedName>
    <alternativeName>
        <fullName>Phorbolin-1-related protein</fullName>
    </alternativeName>
    <alternativeName>
        <fullName>Phorbolin-2/3</fullName>
    </alternativeName>
</protein>
<reference key="1">
    <citation type="journal article" date="1999" name="J. Invest. Dermatol.">
        <title>Psoriasis upregulated phorbolin-1 shares structural but not functional similarity to the mRNA-editing protein apobec-1.</title>
        <authorList>
            <person name="Madsen P.P."/>
            <person name="Anant S."/>
            <person name="Rasmussen H.H."/>
            <person name="Gromov P."/>
            <person name="Vorum H."/>
            <person name="Dumanski J.P."/>
            <person name="Tommerup N."/>
            <person name="Collins J.E."/>
            <person name="Wright C.L."/>
            <person name="Dunham I."/>
            <person name="Macginnitie A.J."/>
            <person name="Davidson N.O."/>
            <person name="Celis J.E."/>
        </authorList>
    </citation>
    <scope>NUCLEOTIDE SEQUENCE [MRNA] (ISOFORM 1)</scope>
    <scope>VARIANT LYS-146</scope>
    <scope>INDUCTION</scope>
    <source>
        <tissue>Keratinocyte</tissue>
    </source>
</reference>
<reference key="2">
    <citation type="journal article" date="2005" name="AIDS Res. Hum. Retroviruses">
        <title>Regulated production and anti-HIV type 1 activities of cytidine deaminases APOBEC3B, 3F, and 3G.</title>
        <authorList>
            <person name="Rose K.M."/>
            <person name="Marin M."/>
            <person name="Kozak S.L."/>
            <person name="Kabat D."/>
        </authorList>
    </citation>
    <scope>NUCLEOTIDE SEQUENCE [MRNA] (ISOFORM 1)</scope>
    <scope>FUNCTION</scope>
</reference>
<reference key="3">
    <citation type="journal article" date="2004" name="Genome Biol.">
        <title>A genome annotation-driven approach to cloning the human ORFeome.</title>
        <authorList>
            <person name="Collins J.E."/>
            <person name="Wright C.L."/>
            <person name="Edwards C.A."/>
            <person name="Davis M.P."/>
            <person name="Grinham J.A."/>
            <person name="Cole C.G."/>
            <person name="Goward M.E."/>
            <person name="Aguado B."/>
            <person name="Mallya M."/>
            <person name="Mokrab Y."/>
            <person name="Huckle E.J."/>
            <person name="Beare D.M."/>
            <person name="Dunham I."/>
        </authorList>
    </citation>
    <scope>NUCLEOTIDE SEQUENCE [LARGE SCALE MRNA] (ISOFORM 3)</scope>
    <scope>VARIANTS GLU-62 AND LYS-146</scope>
</reference>
<reference key="4">
    <citation type="journal article" date="1999" name="Nature">
        <title>The DNA sequence of human chromosome 22.</title>
        <authorList>
            <person name="Dunham I."/>
            <person name="Hunt A.R."/>
            <person name="Collins J.E."/>
            <person name="Bruskiewich R."/>
            <person name="Beare D.M."/>
            <person name="Clamp M."/>
            <person name="Smink L.J."/>
            <person name="Ainscough R."/>
            <person name="Almeida J.P."/>
            <person name="Babbage A.K."/>
            <person name="Bagguley C."/>
            <person name="Bailey J."/>
            <person name="Barlow K.F."/>
            <person name="Bates K.N."/>
            <person name="Beasley O.P."/>
            <person name="Bird C.P."/>
            <person name="Blakey S.E."/>
            <person name="Bridgeman A.M."/>
            <person name="Buck D."/>
            <person name="Burgess J."/>
            <person name="Burrill W.D."/>
            <person name="Burton J."/>
            <person name="Carder C."/>
            <person name="Carter N.P."/>
            <person name="Chen Y."/>
            <person name="Clark G."/>
            <person name="Clegg S.M."/>
            <person name="Cobley V.E."/>
            <person name="Cole C.G."/>
            <person name="Collier R.E."/>
            <person name="Connor R."/>
            <person name="Conroy D."/>
            <person name="Corby N.R."/>
            <person name="Coville G.J."/>
            <person name="Cox A.V."/>
            <person name="Davis J."/>
            <person name="Dawson E."/>
            <person name="Dhami P.D."/>
            <person name="Dockree C."/>
            <person name="Dodsworth S.J."/>
            <person name="Durbin R.M."/>
            <person name="Ellington A.G."/>
            <person name="Evans K.L."/>
            <person name="Fey J.M."/>
            <person name="Fleming K."/>
            <person name="French L."/>
            <person name="Garner A.A."/>
            <person name="Gilbert J.G.R."/>
            <person name="Goward M.E."/>
            <person name="Grafham D.V."/>
            <person name="Griffiths M.N.D."/>
            <person name="Hall C."/>
            <person name="Hall R.E."/>
            <person name="Hall-Tamlyn G."/>
            <person name="Heathcott R.W."/>
            <person name="Ho S."/>
            <person name="Holmes S."/>
            <person name="Hunt S.E."/>
            <person name="Jones M.C."/>
            <person name="Kershaw J."/>
            <person name="Kimberley A.M."/>
            <person name="King A."/>
            <person name="Laird G.K."/>
            <person name="Langford C.F."/>
            <person name="Leversha M.A."/>
            <person name="Lloyd C."/>
            <person name="Lloyd D.M."/>
            <person name="Martyn I.D."/>
            <person name="Mashreghi-Mohammadi M."/>
            <person name="Matthews L.H."/>
            <person name="Mccann O.T."/>
            <person name="Mcclay J."/>
            <person name="Mclaren S."/>
            <person name="McMurray A.A."/>
            <person name="Milne S.A."/>
            <person name="Mortimore B.J."/>
            <person name="Odell C.N."/>
            <person name="Pavitt R."/>
            <person name="Pearce A.V."/>
            <person name="Pearson D."/>
            <person name="Phillimore B.J.C.T."/>
            <person name="Phillips S.H."/>
            <person name="Plumb R.W."/>
            <person name="Ramsay H."/>
            <person name="Ramsey Y."/>
            <person name="Rogers L."/>
            <person name="Ross M.T."/>
            <person name="Scott C.E."/>
            <person name="Sehra H.K."/>
            <person name="Skuce C.D."/>
            <person name="Smalley S."/>
            <person name="Smith M.L."/>
            <person name="Soderlund C."/>
            <person name="Spragon L."/>
            <person name="Steward C.A."/>
            <person name="Sulston J.E."/>
            <person name="Swann R.M."/>
            <person name="Vaudin M."/>
            <person name="Wall M."/>
            <person name="Wallis J.M."/>
            <person name="Whiteley M.N."/>
            <person name="Willey D.L."/>
            <person name="Williams L."/>
            <person name="Williams S.A."/>
            <person name="Williamson H."/>
            <person name="Wilmer T.E."/>
            <person name="Wilming L."/>
            <person name="Wright C.L."/>
            <person name="Hubbard T."/>
            <person name="Bentley D.R."/>
            <person name="Beck S."/>
            <person name="Rogers J."/>
            <person name="Shimizu N."/>
            <person name="Minoshima S."/>
            <person name="Kawasaki K."/>
            <person name="Sasaki T."/>
            <person name="Asakawa S."/>
            <person name="Kudoh J."/>
            <person name="Shintani A."/>
            <person name="Shibuya K."/>
            <person name="Yoshizaki Y."/>
            <person name="Aoki N."/>
            <person name="Mitsuyama S."/>
            <person name="Roe B.A."/>
            <person name="Chen F."/>
            <person name="Chu L."/>
            <person name="Crabtree J."/>
            <person name="Deschamps S."/>
            <person name="Do A."/>
            <person name="Do T."/>
            <person name="Dorman A."/>
            <person name="Fang F."/>
            <person name="Fu Y."/>
            <person name="Hu P."/>
            <person name="Hua A."/>
            <person name="Kenton S."/>
            <person name="Lai H."/>
            <person name="Lao H.I."/>
            <person name="Lewis J."/>
            <person name="Lewis S."/>
            <person name="Lin S.-P."/>
            <person name="Loh P."/>
            <person name="Malaj E."/>
            <person name="Nguyen T."/>
            <person name="Pan H."/>
            <person name="Phan S."/>
            <person name="Qi S."/>
            <person name="Qian Y."/>
            <person name="Ray L."/>
            <person name="Ren Q."/>
            <person name="Shaull S."/>
            <person name="Sloan D."/>
            <person name="Song L."/>
            <person name="Wang Q."/>
            <person name="Wang Y."/>
            <person name="Wang Z."/>
            <person name="White J."/>
            <person name="Willingham D."/>
            <person name="Wu H."/>
            <person name="Yao Z."/>
            <person name="Zhan M."/>
            <person name="Zhang G."/>
            <person name="Chissoe S."/>
            <person name="Murray J."/>
            <person name="Miller N."/>
            <person name="Minx P."/>
            <person name="Fulton R."/>
            <person name="Johnson D."/>
            <person name="Bemis G."/>
            <person name="Bentley D."/>
            <person name="Bradshaw H."/>
            <person name="Bourne S."/>
            <person name="Cordes M."/>
            <person name="Du Z."/>
            <person name="Fulton L."/>
            <person name="Goela D."/>
            <person name="Graves T."/>
            <person name="Hawkins J."/>
            <person name="Hinds K."/>
            <person name="Kemp K."/>
            <person name="Latreille P."/>
            <person name="Layman D."/>
            <person name="Ozersky P."/>
            <person name="Rohlfing T."/>
            <person name="Scheet P."/>
            <person name="Walker C."/>
            <person name="Wamsley A."/>
            <person name="Wohldmann P."/>
            <person name="Pepin K."/>
            <person name="Nelson J."/>
            <person name="Korf I."/>
            <person name="Bedell J.A."/>
            <person name="Hillier L.W."/>
            <person name="Mardis E."/>
            <person name="Waterston R."/>
            <person name="Wilson R."/>
            <person name="Emanuel B.S."/>
            <person name="Shaikh T."/>
            <person name="Kurahashi H."/>
            <person name="Saitta S."/>
            <person name="Budarf M.L."/>
            <person name="McDermid H.E."/>
            <person name="Johnson A."/>
            <person name="Wong A.C.C."/>
            <person name="Morrow B.E."/>
            <person name="Edelmann L."/>
            <person name="Kim U.J."/>
            <person name="Shizuya H."/>
            <person name="Simon M.I."/>
            <person name="Dumanski J.P."/>
            <person name="Peyrard M."/>
            <person name="Kedra D."/>
            <person name="Seroussi E."/>
            <person name="Fransson I."/>
            <person name="Tapia I."/>
            <person name="Bruder C.E."/>
            <person name="O'Brien K.P."/>
            <person name="Wilkinson P."/>
            <person name="Bodenteich A."/>
            <person name="Hartman K."/>
            <person name="Hu X."/>
            <person name="Khan A.S."/>
            <person name="Lane L."/>
            <person name="Tilahun Y."/>
            <person name="Wright H."/>
        </authorList>
    </citation>
    <scope>NUCLEOTIDE SEQUENCE [LARGE SCALE GENOMIC DNA]</scope>
</reference>
<reference key="5">
    <citation type="journal article" date="2004" name="Genome Res.">
        <title>The status, quality, and expansion of the NIH full-length cDNA project: the Mammalian Gene Collection (MGC).</title>
        <authorList>
            <consortium name="The MGC Project Team"/>
        </authorList>
    </citation>
    <scope>NUCLEOTIDE SEQUENCE [LARGE SCALE MRNA] (ISOFORM 2)</scope>
    <scope>VARIANT LYS-146</scope>
    <source>
        <tissue>Uterus</tissue>
    </source>
</reference>
<reference key="6">
    <citation type="journal article" date="2002" name="Genomics">
        <title>An anthropoid-specific locus of orphan C to U RNA-editing enzymes on chromosome 22.</title>
        <authorList>
            <person name="Jarmuz A."/>
            <person name="Chester A."/>
            <person name="Bayliss J."/>
            <person name="Gisbourne J."/>
            <person name="Dunham I."/>
            <person name="Scott J."/>
            <person name="Navaratnam N."/>
        </authorList>
    </citation>
    <scope>GENE FAMILY ORGANIZATION</scope>
    <scope>TISSUE SPECIFICITY</scope>
    <scope>RNA-BINDING</scope>
    <scope>ZINC-BINDING</scope>
    <scope>INTERACTION WITH APOBEC3G</scope>
</reference>
<reference key="7">
    <citation type="journal article" date="2003" name="Trends Genet.">
        <title>Messenger RNA editing in mammals: new members of the APOBEC family seeking roles in the family business.</title>
        <authorList>
            <person name="Wedekind J.E."/>
            <person name="Dance G.S.C."/>
            <person name="Sowden M.P."/>
            <person name="Smith H.C."/>
        </authorList>
    </citation>
    <scope>REVIEW ON APOBEC FAMILIES</scope>
</reference>
<reference key="8">
    <citation type="journal article" date="2003" name="Cell">
        <title>Species-specific exclusion of APOBEC3G from HIV-1 virions by Vif.</title>
        <authorList>
            <person name="Mariani R."/>
            <person name="Chen D."/>
            <person name="Schroefelbauer B."/>
            <person name="Navarro F."/>
            <person name="Koenig R."/>
            <person name="Bollman B."/>
            <person name="Muenk C."/>
            <person name="Nymark-McMahon H."/>
            <person name="Landau N.R."/>
        </authorList>
    </citation>
    <scope>FUNCTION IN HIV-1 INFECTIVITY</scope>
</reference>
<reference key="9">
    <citation type="journal article" date="2004" name="J. Biol. Chem.">
        <title>APOBEC3B and APOBEC3C are potent inhibitors of simian immunodeficiency virus replication.</title>
        <authorList>
            <person name="Yu Q."/>
            <person name="Chen D."/>
            <person name="Koenig R."/>
            <person name="Mariani R."/>
            <person name="Unutmaz D."/>
            <person name="Landau N.R."/>
        </authorList>
    </citation>
    <scope>FUNCTION IN SIV RESTRICTION</scope>
</reference>
<reference key="10">
    <citation type="journal article" date="2006" name="Curr. Biol.">
        <title>APOBEC3A is a potent inhibitor of adeno-associated virus and retrotransposons.</title>
        <authorList>
            <person name="Chen H."/>
            <person name="Lilley C.E."/>
            <person name="Yu Q."/>
            <person name="Lee D.V."/>
            <person name="Chou J."/>
            <person name="Narvaiza I."/>
            <person name="Landau N.R."/>
            <person name="Weitzman M.D."/>
        </authorList>
    </citation>
    <scope>FUNCTION IN RETROTRANSPOSITION</scope>
</reference>
<reference key="11">
    <citation type="journal article" date="2006" name="J. Biol. Chem.">
        <title>Reversed functional organization of mouse and human APOBEC3 cytidine deaminase domains.</title>
        <authorList>
            <person name="Hakata Y."/>
            <person name="Landau N.R."/>
        </authorList>
    </citation>
    <scope>DOMAIN CMP/DCMP DEAMINASE</scope>
</reference>
<reference key="12">
    <citation type="journal article" date="2006" name="PLoS Pathog.">
        <title>Human retroviral host restriction factors APOBEC3G and APOBEC3F localize to mRNA processing bodies.</title>
        <authorList>
            <person name="Wichroski M.J."/>
            <person name="Robb G.B."/>
            <person name="Rana T.M."/>
        </authorList>
    </citation>
    <scope>SUBCELLULAR LOCATION</scope>
</reference>
<reference key="13">
    <citation type="journal article" date="2008" name="Annu. Rev. Immunol.">
        <title>The APOBEC3 cytidine deaminases: an innate defensive network opposing exogenous retroviruses and endogenous retroelements.</title>
        <authorList>
            <person name="Chiu Y.L."/>
            <person name="Greene W.C."/>
        </authorList>
    </citation>
    <scope>REVIEW</scope>
</reference>
<reference key="14">
    <citation type="journal article" date="2008" name="Curr. Opin. Infect. Dis.">
        <title>Hepatitis B: modern concepts in pathogenesis--APOBEC3 cytidine deaminases as effectors in innate immunity against the hepatitis B virus.</title>
        <authorList>
            <person name="Bonvin M."/>
            <person name="Greeve J."/>
        </authorList>
    </citation>
    <scope>REVIEW ON FUNCTION IN HBV RESTRICTION</scope>
</reference>
<reference key="15">
    <citation type="journal article" date="2008" name="J. Virol.">
        <title>Two regions within the amino-terminal half of APOBEC3G cooperate to determine cytoplasmic localization.</title>
        <authorList>
            <person name="Stenglein M.D."/>
            <person name="Matsuo H."/>
            <person name="Harris R.S."/>
        </authorList>
    </citation>
    <scope>SUBCELLULAR LOCATION</scope>
</reference>
<reference key="16">
    <citation type="journal article" date="2010" name="Nucleic Acids Res.">
        <title>Quantitative profiling of the full APOBEC3 mRNA repertoire in lymphocytes and tissues: implications for HIV-1 restriction.</title>
        <authorList>
            <person name="Refsland E.W."/>
            <person name="Stenglein M.D."/>
            <person name="Shindo K."/>
            <person name="Albin J.S."/>
            <person name="Brown W.L."/>
            <person name="Harris R.S."/>
        </authorList>
    </citation>
    <scope>TISSUE SPECIFICITY</scope>
</reference>
<reference key="17">
    <citation type="journal article" date="2010" name="Nat. Struct. Mol. Biol.">
        <title>APOBEC3 proteins mediate the clearance of foreign DNA from human cells.</title>
        <authorList>
            <person name="Stenglein M.D."/>
            <person name="Burns M.B."/>
            <person name="Li M."/>
            <person name="Lengyel J."/>
            <person name="Harris R.S."/>
        </authorList>
    </citation>
    <scope>FUNCTION IN RETROTRANSPOSITION</scope>
</reference>
<reference key="18">
    <citation type="journal article" date="2011" name="J. Virol.">
        <title>Human and rhesus APOBEC3D, APOBEC3F, APOBEC3G, and APOBEC3H demonstrate a conserved capacity to restrict Vif-deficient HIV-1.</title>
        <authorList>
            <person name="Hultquist J.F."/>
            <person name="Lengyel J.A."/>
            <person name="Refsland E.W."/>
            <person name="LaRue R.S."/>
            <person name="Lackey L."/>
            <person name="Brown W.L."/>
            <person name="Harris R.S."/>
        </authorList>
    </citation>
    <scope>SUBCELLULAR LOCATION</scope>
</reference>
<reference key="19">
    <citation type="journal article" date="2012" name="Front. Microbiol.">
        <title>Retroelements versus APOBEC3 family members: No great escape from the magnificent seven.</title>
        <authorList>
            <person name="Arias J.F."/>
            <person name="Koyama T."/>
            <person name="Kinomoto M."/>
            <person name="Tokunaga K."/>
        </authorList>
    </citation>
    <scope>REVIEW</scope>
</reference>
<reference key="20">
    <citation type="journal article" date="2012" name="J. Virol.">
        <title>APOBEC3A, APOBEC3B, and APOBEC3H haplotype 2 restrict human T-lymphotropic virus type 1.</title>
        <authorList>
            <person name="Ooms M."/>
            <person name="Krikoni A."/>
            <person name="Kress A.K."/>
            <person name="Simon V."/>
            <person name="Muenk C."/>
        </authorList>
    </citation>
    <scope>FUNCTION IN HTLV-1 RESTRICTION</scope>
</reference>
<reference key="21">
    <citation type="journal article" date="2012" name="J. Virol.">
        <title>HIV-1 replication and APOBEC3 antiviral activity are not regulated by P bodies.</title>
        <authorList>
            <person name="Phalora P.K."/>
            <person name="Sherer N.M."/>
            <person name="Wolinsky S.M."/>
            <person name="Swanson C.M."/>
            <person name="Malim M.H."/>
        </authorList>
    </citation>
    <scope>SUBCELLULAR LOCATION</scope>
</reference>
<reference key="22">
    <citation type="journal article" date="2012" name="Semin. Cell Dev. Biol.">
        <title>Functions and regulation of the APOBEC family of proteins.</title>
        <authorList>
            <person name="Smith H.C."/>
            <person name="Bennett R.P."/>
            <person name="Kizilyer A."/>
            <person name="McDougall W.M."/>
            <person name="Prohaska K.M."/>
        </authorList>
    </citation>
    <scope>REVIEW</scope>
</reference>
<evidence type="ECO:0000250" key="1"/>
<evidence type="ECO:0000255" key="2"/>
<evidence type="ECO:0000255" key="3">
    <source>
        <dbReference type="PROSITE-ProRule" id="PRU01083"/>
    </source>
</evidence>
<evidence type="ECO:0000269" key="4">
    <source>
    </source>
</evidence>
<evidence type="ECO:0000269" key="5">
    <source>
    </source>
</evidence>
<evidence type="ECO:0000269" key="6">
    <source>
    </source>
</evidence>
<evidence type="ECO:0000269" key="7">
    <source>
    </source>
</evidence>
<evidence type="ECO:0000269" key="8">
    <source>
    </source>
</evidence>
<evidence type="ECO:0000269" key="9">
    <source>
    </source>
</evidence>
<evidence type="ECO:0000269" key="10">
    <source>
    </source>
</evidence>
<evidence type="ECO:0000269" key="11">
    <source>
    </source>
</evidence>
<evidence type="ECO:0000269" key="12">
    <source>
    </source>
</evidence>
<evidence type="ECO:0000269" key="13">
    <source>
    </source>
</evidence>
<evidence type="ECO:0000269" key="14">
    <source>
    </source>
</evidence>
<evidence type="ECO:0000269" key="15">
    <source>
    </source>
</evidence>
<evidence type="ECO:0000269" key="16">
    <source>
    </source>
</evidence>
<evidence type="ECO:0000269" key="17">
    <source>
    </source>
</evidence>
<evidence type="ECO:0000269" key="18">
    <source>
    </source>
</evidence>
<evidence type="ECO:0000269" key="19">
    <source>
    </source>
</evidence>
<evidence type="ECO:0000303" key="20">
    <source>
    </source>
</evidence>
<evidence type="ECO:0000303" key="21">
    <source>
    </source>
</evidence>
<evidence type="ECO:0000305" key="22"/>
<evidence type="ECO:0007829" key="23">
    <source>
        <dbReference type="PDB" id="2NBQ"/>
    </source>
</evidence>
<evidence type="ECO:0007829" key="24">
    <source>
        <dbReference type="PDB" id="5CQI"/>
    </source>
</evidence>
<evidence type="ECO:0007829" key="25">
    <source>
        <dbReference type="PDB" id="5TKM"/>
    </source>
</evidence>
<evidence type="ECO:0007829" key="26">
    <source>
        <dbReference type="PDB" id="7RW6"/>
    </source>
</evidence>
<comment type="function">
    <text evidence="6 8 10 11 15 18">DNA deaminase (cytidine deaminase) which acts as an inhibitor of retrovirus replication and retrotransposon mobility via deaminase-dependent and -independent mechanisms. After the penetration of retroviral nucleocapsids into target cells of infection and the initiation of reverse transcription, it can induce the conversion of cytosine to uracil in the minus-sense single-strand viral DNA, leading to G-to-A hypermutations in the subsequent plus-strand viral DNA. The resultant detrimental levels of mutations in the proviral genome, along with a deamination-independent mechanism that works prior to the proviral integration, together exert efficient antiretroviral effects in infected target cells. Selectively targets single-stranded DNA and does not deaminate double-stranded DNA or single- or double-stranded RNA. Exhibits antiviral activity against simian immunodeficiency virus (SIV), hepatitis B virus (HBV) and human T-cell leukemia virus type 1 (HTLV-1) and may inhibit the mobility of LTR and non-LTR retrotransposons.</text>
</comment>
<comment type="catalytic activity">
    <reaction>
        <text>a 2'-deoxycytidine in single-stranded DNA + H2O + H(+) = a 2'-deoxyuridine in single-stranded DNA + NH4(+)</text>
        <dbReference type="Rhea" id="RHEA:50948"/>
        <dbReference type="Rhea" id="RHEA-COMP:12846"/>
        <dbReference type="Rhea" id="RHEA-COMP:12847"/>
        <dbReference type="ChEBI" id="CHEBI:15377"/>
        <dbReference type="ChEBI" id="CHEBI:15378"/>
        <dbReference type="ChEBI" id="CHEBI:28938"/>
        <dbReference type="ChEBI" id="CHEBI:85452"/>
        <dbReference type="ChEBI" id="CHEBI:133902"/>
        <dbReference type="EC" id="3.5.4.38"/>
    </reaction>
</comment>
<comment type="cofactor">
    <cofactor>
        <name>Zn(2+)</name>
        <dbReference type="ChEBI" id="CHEBI:29105"/>
    </cofactor>
</comment>
<comment type="subunit">
    <text evidence="5">Homodimer. Interacts with APOBEC3G. Does not interact with APOBEC1.</text>
</comment>
<comment type="interaction">
    <interactant intactId="EBI-2967317">
        <id>Q9UH17</id>
    </interactant>
    <interactant intactId="EBI-295644">
        <id>P11802</id>
        <label>CDK4</label>
    </interactant>
    <organismsDiffer>false</organismsDiffer>
    <experiments>9</experiments>
</comment>
<comment type="interaction">
    <interactant intactId="EBI-17624977">
        <id>Q9UH17-2</id>
    </interactant>
    <interactant intactId="EBI-712648">
        <id>O95994</id>
        <label>AGR2</label>
    </interactant>
    <organismsDiffer>false</organismsDiffer>
    <experiments>3</experiments>
</comment>
<comment type="interaction">
    <interactant intactId="EBI-17624977">
        <id>Q9UH17-2</id>
    </interactant>
    <interactant intactId="EBI-752094">
        <id>Q12982</id>
        <label>BNIP2</label>
    </interactant>
    <organismsDiffer>false</organismsDiffer>
    <experiments>3</experiments>
</comment>
<comment type="subcellular location">
    <subcellularLocation>
        <location evidence="12 14 17 19">Nucleus</location>
    </subcellularLocation>
</comment>
<comment type="alternative products">
    <event type="alternative splicing"/>
    <isoform>
        <id>Q9UH17-1</id>
        <name>1</name>
        <sequence type="displayed"/>
    </isoform>
    <isoform>
        <id>Q9UH17-2</id>
        <name>2</name>
        <sequence type="described" ref="VSP_009802"/>
    </isoform>
    <isoform>
        <id>Q9UH17-3</id>
        <name>3</name>
        <sequence type="described" ref="VSP_044900"/>
    </isoform>
</comment>
<comment type="tissue specificity">
    <text evidence="5 16">Expressed at high and moderate levels in peripheral blood leukocytes, spleen, testes, heart, thymus, prostate and ovary. Also expressed at low levels in several other tissues.</text>
</comment>
<comment type="induction">
    <text evidence="4">Phorbol 12-myristate 13-acetate (PMA) induces overexpression in keratinocytes. Up-regulated by IFN-alpha.</text>
</comment>
<comment type="domain">
    <text evidence="13">The CMP/dCMP deaminase domain 1 mediates RNA binding, RNA-dependent oligomerization and virion incorporation whereas the CMP/dCMP deaminase domain 2 confers deoxycytidine deaminase activity and substrate sequence specificity.</text>
</comment>
<comment type="miscellaneous">
    <text>It is one of seven related genes or pseudogenes found in a cluster, thought to result from gene duplication, on chromosome 22.</text>
</comment>
<comment type="miscellaneous">
    <molecule>Isoform 2</molecule>
    <text evidence="22">May be due to a competing donor splice site.</text>
</comment>
<comment type="similarity">
    <text evidence="22">Belongs to the cytidine and deoxycytidylate deaminase family.</text>
</comment>
<comment type="sequence caution" evidence="22">
    <conflict type="erroneous initiation">
        <sequence resource="EMBL-CDS" id="AAD00089"/>
    </conflict>
    <text>Truncated N-terminus.</text>
</comment>
<comment type="sequence caution" evidence="22">
    <conflict type="frameshift">
        <sequence resource="EMBL-CDS" id="AAD00090"/>
    </conflict>
    <text>Frameshifts result in two separate ORFs termed phorbolins 2 and 3.</text>
</comment>
<sequence>MNPQIRNPMERMYRDTFYDNFENEPILYGRSYTWLCYEVKIKRGRSNLLWDTGVFRGQVYFKPQYHAEMCFLSWFCGNQLPAYKCFQITWFVSWTPCPDCVAKLAEFLSEHPNVTLTISAARLYYYWERDYRRALCRLSQAGARVTIMDYEEFAYCWENFVYNEGQQFMPWYKFDENYAFLHRTLKEILRYLMDPDTFTFNFNNDPLVLRRRQTYLCYEVERLDNGTWVLMDQHMGFLCNEAKNLLCGFYGRHAELRFLDLVPSLQLDPAQIYRVTWFISWSPCFSWGCAGEVRAFLQENTHVRLRIFAARIYDYDPLYKEALQMLRDAGAQVSIMTYDEFEYCWDTFVYRQGCPFQPWDGLEEHSQALSGRLRAILQNQGN</sequence>
<proteinExistence type="evidence at protein level"/>
<gene>
    <name type="primary">APOBEC3B</name>
</gene>
<organism>
    <name type="scientific">Homo sapiens</name>
    <name type="common">Human</name>
    <dbReference type="NCBI Taxonomy" id="9606"/>
    <lineage>
        <taxon>Eukaryota</taxon>
        <taxon>Metazoa</taxon>
        <taxon>Chordata</taxon>
        <taxon>Craniata</taxon>
        <taxon>Vertebrata</taxon>
        <taxon>Euteleostomi</taxon>
        <taxon>Mammalia</taxon>
        <taxon>Eutheria</taxon>
        <taxon>Euarchontoglires</taxon>
        <taxon>Primates</taxon>
        <taxon>Haplorrhini</taxon>
        <taxon>Catarrhini</taxon>
        <taxon>Hominidae</taxon>
        <taxon>Homo</taxon>
    </lineage>
</organism>